<dbReference type="EC" id="1.2.3.1" evidence="7 8"/>
<dbReference type="EC" id="1.17.3.-" evidence="8"/>
<dbReference type="EMBL" id="AB009345">
    <property type="protein sequence ID" value="BAA81726.1"/>
    <property type="molecule type" value="mRNA"/>
</dbReference>
<dbReference type="RefSeq" id="NP_001075459.1">
    <property type="nucleotide sequence ID" value="NM_001081990.1"/>
</dbReference>
<dbReference type="SMR" id="P80456"/>
<dbReference type="FunCoup" id="P80456">
    <property type="interactions" value="138"/>
</dbReference>
<dbReference type="STRING" id="9986.ENSOCUP00000046241"/>
<dbReference type="BindingDB" id="P80456"/>
<dbReference type="ChEMBL" id="CHEMBL1641356"/>
<dbReference type="PaxDb" id="9986-ENSOCUP00000012025"/>
<dbReference type="GeneID" id="100008601"/>
<dbReference type="KEGG" id="ocu:100008601"/>
<dbReference type="CTD" id="316"/>
<dbReference type="eggNOG" id="KOG0430">
    <property type="taxonomic scope" value="Eukaryota"/>
</dbReference>
<dbReference type="InParanoid" id="P80456"/>
<dbReference type="OrthoDB" id="8300278at2759"/>
<dbReference type="BRENDA" id="1.2.3.1">
    <property type="organism ID" value="1749"/>
</dbReference>
<dbReference type="SABIO-RK" id="P80456"/>
<dbReference type="PRO" id="PR:P80456"/>
<dbReference type="Proteomes" id="UP000001811">
    <property type="component" value="Unplaced"/>
</dbReference>
<dbReference type="GO" id="GO:0005829">
    <property type="term" value="C:cytosol"/>
    <property type="evidence" value="ECO:0000250"/>
    <property type="project" value="UniProtKB"/>
</dbReference>
<dbReference type="GO" id="GO:0051537">
    <property type="term" value="F:2 iron, 2 sulfur cluster binding"/>
    <property type="evidence" value="ECO:0000250"/>
    <property type="project" value="UniProtKB"/>
</dbReference>
<dbReference type="GO" id="GO:0004031">
    <property type="term" value="F:aldehyde oxidase activity"/>
    <property type="evidence" value="ECO:0000250"/>
    <property type="project" value="UniProtKB"/>
</dbReference>
<dbReference type="GO" id="GO:0071949">
    <property type="term" value="F:FAD binding"/>
    <property type="evidence" value="ECO:0007669"/>
    <property type="project" value="InterPro"/>
</dbReference>
<dbReference type="GO" id="GO:0050660">
    <property type="term" value="F:flavin adenine dinucleotide binding"/>
    <property type="evidence" value="ECO:0000250"/>
    <property type="project" value="UniProtKB"/>
</dbReference>
<dbReference type="GO" id="GO:0005506">
    <property type="term" value="F:iron ion binding"/>
    <property type="evidence" value="ECO:0000250"/>
    <property type="project" value="UniProtKB"/>
</dbReference>
<dbReference type="GO" id="GO:0043546">
    <property type="term" value="F:molybdopterin cofactor binding"/>
    <property type="evidence" value="ECO:0000250"/>
    <property type="project" value="UniProtKB"/>
</dbReference>
<dbReference type="GO" id="GO:0051287">
    <property type="term" value="F:NAD binding"/>
    <property type="evidence" value="ECO:0007669"/>
    <property type="project" value="InterPro"/>
</dbReference>
<dbReference type="GO" id="GO:0042803">
    <property type="term" value="F:protein homodimerization activity"/>
    <property type="evidence" value="ECO:0000250"/>
    <property type="project" value="UniProtKB"/>
</dbReference>
<dbReference type="GO" id="GO:0006629">
    <property type="term" value="P:lipid metabolic process"/>
    <property type="evidence" value="ECO:0007669"/>
    <property type="project" value="UniProtKB-KW"/>
</dbReference>
<dbReference type="GO" id="GO:0006805">
    <property type="term" value="P:xenobiotic metabolic process"/>
    <property type="evidence" value="ECO:0000250"/>
    <property type="project" value="UniProtKB"/>
</dbReference>
<dbReference type="FunFam" id="1.10.150.120:FF:000001">
    <property type="entry name" value="Aldehyde oxidase 1"/>
    <property type="match status" value="1"/>
</dbReference>
<dbReference type="FunFam" id="3.10.20.30:FF:000015">
    <property type="entry name" value="Aldehyde oxidase 1"/>
    <property type="match status" value="1"/>
</dbReference>
<dbReference type="FunFam" id="3.30.365.10:FF:000003">
    <property type="entry name" value="Aldehyde oxidase 1"/>
    <property type="match status" value="1"/>
</dbReference>
<dbReference type="FunFam" id="3.90.1170.50:FF:000001">
    <property type="entry name" value="Aldehyde oxidase 1"/>
    <property type="match status" value="1"/>
</dbReference>
<dbReference type="FunFam" id="3.30.365.10:FF:000004">
    <property type="entry name" value="Xanthine dehydrogenase oxidase"/>
    <property type="match status" value="1"/>
</dbReference>
<dbReference type="FunFam" id="3.30.390.50:FF:000001">
    <property type="entry name" value="Xanthine dehydrogenase oxidase"/>
    <property type="match status" value="1"/>
</dbReference>
<dbReference type="FunFam" id="3.30.43.10:FF:000001">
    <property type="entry name" value="Xanthine dehydrogenase/oxidase"/>
    <property type="match status" value="1"/>
</dbReference>
<dbReference type="FunFam" id="3.30.465.10:FF:000004">
    <property type="entry name" value="Xanthine dehydrogenase/oxidase"/>
    <property type="match status" value="1"/>
</dbReference>
<dbReference type="Gene3D" id="3.10.20.30">
    <property type="match status" value="1"/>
</dbReference>
<dbReference type="Gene3D" id="3.30.465.10">
    <property type="match status" value="1"/>
</dbReference>
<dbReference type="Gene3D" id="1.10.150.120">
    <property type="entry name" value="[2Fe-2S]-binding domain"/>
    <property type="match status" value="1"/>
</dbReference>
<dbReference type="Gene3D" id="3.90.1170.50">
    <property type="entry name" value="Aldehyde oxidase/xanthine dehydrogenase, a/b hammerhead"/>
    <property type="match status" value="1"/>
</dbReference>
<dbReference type="Gene3D" id="3.30.365.10">
    <property type="entry name" value="Aldehyde oxidase/xanthine dehydrogenase, molybdopterin binding domain"/>
    <property type="match status" value="4"/>
</dbReference>
<dbReference type="Gene3D" id="3.30.390.50">
    <property type="entry name" value="CO dehydrogenase flavoprotein, C-terminal domain"/>
    <property type="match status" value="1"/>
</dbReference>
<dbReference type="Gene3D" id="3.30.43.10">
    <property type="entry name" value="Uridine Diphospho-n-acetylenolpyruvylglucosamine Reductase, domain 2"/>
    <property type="match status" value="1"/>
</dbReference>
<dbReference type="InterPro" id="IPR002888">
    <property type="entry name" value="2Fe-2S-bd"/>
</dbReference>
<dbReference type="InterPro" id="IPR036884">
    <property type="entry name" value="2Fe-2S-bd_dom_sf"/>
</dbReference>
<dbReference type="InterPro" id="IPR036010">
    <property type="entry name" value="2Fe-2S_ferredoxin-like_sf"/>
</dbReference>
<dbReference type="InterPro" id="IPR001041">
    <property type="entry name" value="2Fe-2S_ferredoxin-type"/>
</dbReference>
<dbReference type="InterPro" id="IPR006058">
    <property type="entry name" value="2Fe2S_fd_BS"/>
</dbReference>
<dbReference type="InterPro" id="IPR000674">
    <property type="entry name" value="Ald_Oxase/Xan_DH_a/b"/>
</dbReference>
<dbReference type="InterPro" id="IPR036856">
    <property type="entry name" value="Ald_Oxase/Xan_DH_a/b_sf"/>
</dbReference>
<dbReference type="InterPro" id="IPR016208">
    <property type="entry name" value="Ald_Oxase/xanthine_DH-like"/>
</dbReference>
<dbReference type="InterPro" id="IPR014313">
    <property type="entry name" value="Aldehyde_oxidase"/>
</dbReference>
<dbReference type="InterPro" id="IPR008274">
    <property type="entry name" value="AldOxase/xan_DH_MoCoBD1"/>
</dbReference>
<dbReference type="InterPro" id="IPR046867">
    <property type="entry name" value="AldOxase/xan_DH_MoCoBD2"/>
</dbReference>
<dbReference type="InterPro" id="IPR037165">
    <property type="entry name" value="AldOxase/xan_DH_Mopterin-bd_sf"/>
</dbReference>
<dbReference type="InterPro" id="IPR012675">
    <property type="entry name" value="Beta-grasp_dom_sf"/>
</dbReference>
<dbReference type="InterPro" id="IPR005107">
    <property type="entry name" value="CO_DH_flav_C"/>
</dbReference>
<dbReference type="InterPro" id="IPR036683">
    <property type="entry name" value="CO_DH_flav_C_dom_sf"/>
</dbReference>
<dbReference type="InterPro" id="IPR016166">
    <property type="entry name" value="FAD-bd_PCMH"/>
</dbReference>
<dbReference type="InterPro" id="IPR036318">
    <property type="entry name" value="FAD-bd_PCMH-like_sf"/>
</dbReference>
<dbReference type="InterPro" id="IPR016167">
    <property type="entry name" value="FAD-bd_PCMH_sub1"/>
</dbReference>
<dbReference type="InterPro" id="IPR016169">
    <property type="entry name" value="FAD-bd_PCMH_sub2"/>
</dbReference>
<dbReference type="InterPro" id="IPR002346">
    <property type="entry name" value="Mopterin_DH_FAD-bd"/>
</dbReference>
<dbReference type="InterPro" id="IPR022407">
    <property type="entry name" value="OxRdtase_Mopterin_BS"/>
</dbReference>
<dbReference type="NCBIfam" id="TIGR02969">
    <property type="entry name" value="mam_aldehyde_ox"/>
    <property type="match status" value="1"/>
</dbReference>
<dbReference type="PANTHER" id="PTHR45444">
    <property type="entry name" value="XANTHINE DEHYDROGENASE"/>
    <property type="match status" value="1"/>
</dbReference>
<dbReference type="PANTHER" id="PTHR45444:SF3">
    <property type="entry name" value="XANTHINE DEHYDROGENASE"/>
    <property type="match status" value="1"/>
</dbReference>
<dbReference type="Pfam" id="PF01315">
    <property type="entry name" value="Ald_Xan_dh_C"/>
    <property type="match status" value="1"/>
</dbReference>
<dbReference type="Pfam" id="PF03450">
    <property type="entry name" value="CO_deh_flav_C"/>
    <property type="match status" value="1"/>
</dbReference>
<dbReference type="Pfam" id="PF00941">
    <property type="entry name" value="FAD_binding_5"/>
    <property type="match status" value="1"/>
</dbReference>
<dbReference type="Pfam" id="PF00111">
    <property type="entry name" value="Fer2"/>
    <property type="match status" value="1"/>
</dbReference>
<dbReference type="Pfam" id="PF01799">
    <property type="entry name" value="Fer2_2"/>
    <property type="match status" value="1"/>
</dbReference>
<dbReference type="Pfam" id="PF02738">
    <property type="entry name" value="MoCoBD_1"/>
    <property type="match status" value="1"/>
</dbReference>
<dbReference type="Pfam" id="PF20256">
    <property type="entry name" value="MoCoBD_2"/>
    <property type="match status" value="1"/>
</dbReference>
<dbReference type="PIRSF" id="PIRSF000127">
    <property type="entry name" value="Xanthine_DH"/>
    <property type="match status" value="1"/>
</dbReference>
<dbReference type="SMART" id="SM01008">
    <property type="entry name" value="Ald_Xan_dh_C"/>
    <property type="match status" value="1"/>
</dbReference>
<dbReference type="SMART" id="SM01092">
    <property type="entry name" value="CO_deh_flav_C"/>
    <property type="match status" value="1"/>
</dbReference>
<dbReference type="SUPFAM" id="SSF54292">
    <property type="entry name" value="2Fe-2S ferredoxin-like"/>
    <property type="match status" value="1"/>
</dbReference>
<dbReference type="SUPFAM" id="SSF55447">
    <property type="entry name" value="CO dehydrogenase flavoprotein C-terminal domain-like"/>
    <property type="match status" value="1"/>
</dbReference>
<dbReference type="SUPFAM" id="SSF47741">
    <property type="entry name" value="CO dehydrogenase ISP C-domain like"/>
    <property type="match status" value="1"/>
</dbReference>
<dbReference type="SUPFAM" id="SSF54665">
    <property type="entry name" value="CO dehydrogenase molybdoprotein N-domain-like"/>
    <property type="match status" value="1"/>
</dbReference>
<dbReference type="SUPFAM" id="SSF56176">
    <property type="entry name" value="FAD-binding/transporter-associated domain-like"/>
    <property type="match status" value="1"/>
</dbReference>
<dbReference type="SUPFAM" id="SSF56003">
    <property type="entry name" value="Molybdenum cofactor-binding domain"/>
    <property type="match status" value="1"/>
</dbReference>
<dbReference type="PROSITE" id="PS00197">
    <property type="entry name" value="2FE2S_FER_1"/>
    <property type="match status" value="1"/>
</dbReference>
<dbReference type="PROSITE" id="PS51085">
    <property type="entry name" value="2FE2S_FER_2"/>
    <property type="match status" value="1"/>
</dbReference>
<dbReference type="PROSITE" id="PS51387">
    <property type="entry name" value="FAD_PCMH"/>
    <property type="match status" value="1"/>
</dbReference>
<dbReference type="PROSITE" id="PS00559">
    <property type="entry name" value="MOLYBDOPTERIN_EUK"/>
    <property type="match status" value="1"/>
</dbReference>
<keyword id="KW-0001">2Fe-2S</keyword>
<keyword id="KW-0963">Cytoplasm</keyword>
<keyword id="KW-0903">Direct protein sequencing</keyword>
<keyword id="KW-0274">FAD</keyword>
<keyword id="KW-0285">Flavoprotein</keyword>
<keyword id="KW-0408">Iron</keyword>
<keyword id="KW-0411">Iron-sulfur</keyword>
<keyword id="KW-0443">Lipid metabolism</keyword>
<keyword id="KW-0479">Metal-binding</keyword>
<keyword id="KW-0500">Molybdenum</keyword>
<keyword id="KW-0560">Oxidoreductase</keyword>
<keyword id="KW-0597">Phosphoprotein</keyword>
<keyword id="KW-1185">Reference proteome</keyword>
<comment type="function">
    <text evidence="5 6 7 8">Oxidase with broad substrate specificity, oxidizing aromatic azaheterocycles, such as N1-methylnicotinamide, N-methylphthalazinium and phthalazine, as well as aldehydes, such as benzaldehyde, retinal, pyridoxal, and vanillin. Plays a key role in the metabolism of xenobiotics and drugs containing aromatic azaheterocyclic substituents. Participates in the bioactivation of prodrugs such as famciclovir, catalyzing the oxidation step from 6-deoxypenciclovir to penciclovir, which is a potent antiviral agent. Is probably involved in the regulation of reactive oxygen species homeostasis. May be a prominent source of superoxide generation via the one-electron reduction of molecular oxygen. May also catalyze nitric oxide (NO) production via the reduction of nitrite to NO with NADH or aldehyde as electron donor. May play a role in adipogenesis. Cannot use hypoxanthine and all-trans-retinol as substrate.</text>
</comment>
<comment type="catalytic activity">
    <reaction evidence="7 8">
        <text>an aldehyde + O2 + H2O = a carboxylate + H2O2 + H(+)</text>
        <dbReference type="Rhea" id="RHEA:16829"/>
        <dbReference type="ChEBI" id="CHEBI:15377"/>
        <dbReference type="ChEBI" id="CHEBI:15378"/>
        <dbReference type="ChEBI" id="CHEBI:15379"/>
        <dbReference type="ChEBI" id="CHEBI:16240"/>
        <dbReference type="ChEBI" id="CHEBI:17478"/>
        <dbReference type="ChEBI" id="CHEBI:29067"/>
        <dbReference type="EC" id="1.2.3.1"/>
    </reaction>
</comment>
<comment type="catalytic activity">
    <reaction evidence="7">
        <text>retinal + O2 + H2O = retinoate + H2O2 + H(+)</text>
        <dbReference type="Rhea" id="RHEA:56736"/>
        <dbReference type="ChEBI" id="CHEBI:15035"/>
        <dbReference type="ChEBI" id="CHEBI:15036"/>
        <dbReference type="ChEBI" id="CHEBI:15377"/>
        <dbReference type="ChEBI" id="CHEBI:15378"/>
        <dbReference type="ChEBI" id="CHEBI:15379"/>
        <dbReference type="ChEBI" id="CHEBI:16240"/>
    </reaction>
</comment>
<comment type="catalytic activity">
    <reaction evidence="7">
        <text>all-trans-retinal + O2 + H2O = all-trans-retinoate + H2O2 + H(+)</text>
        <dbReference type="Rhea" id="RHEA:22520"/>
        <dbReference type="ChEBI" id="CHEBI:15377"/>
        <dbReference type="ChEBI" id="CHEBI:15378"/>
        <dbReference type="ChEBI" id="CHEBI:15379"/>
        <dbReference type="ChEBI" id="CHEBI:16240"/>
        <dbReference type="ChEBI" id="CHEBI:17898"/>
        <dbReference type="ChEBI" id="CHEBI:35291"/>
        <dbReference type="EC" id="1.2.3.1"/>
    </reaction>
</comment>
<comment type="cofactor">
    <cofactor evidence="6 7">
        <name>[2Fe-2S] cluster</name>
        <dbReference type="ChEBI" id="CHEBI:190135"/>
    </cofactor>
    <text evidence="6 7">Binds 2 [2Fe-2S] clusters per subunit.</text>
</comment>
<comment type="cofactor">
    <cofactor evidence="6 7">
        <name>FAD</name>
        <dbReference type="ChEBI" id="CHEBI:57692"/>
    </cofactor>
    <text evidence="6 7">Binds 1 FAD per subunit.</text>
</comment>
<comment type="cofactor">
    <cofactor evidence="6 7">
        <name>Mo-molybdopterin</name>
        <dbReference type="ChEBI" id="CHEBI:71302"/>
    </cofactor>
    <text evidence="6 7">Binds 1 Mo-molybdopterin (Mo-MPT) cofactor per subunit.</text>
</comment>
<comment type="activity regulation">
    <text evidence="7 8">Inhibited by hydralazine and menadione. Not inhibited by BOF-4272 or allopurinol, xanthine dehydrogenase potent inhibitors. In contrast to guinea pig, human and rat, isovanillin is not an inhibitor but a substrate for AOX1 in rabbit.</text>
</comment>
<comment type="biophysicochemical properties">
    <kinetics>
        <KM evidence="7">8 uM for all-trans-retinal</KM>
        <KM evidence="7">13 uM for 9-cis-retinal</KM>
        <KM evidence="7">0.9 mM for 13-cis-retinal</KM>
        <KM evidence="7">0.11 mM for N-methylnicotinamide</KM>
        <KM evidence="7">94.7 uM for O(2)</KM>
        <KM evidence="8">0.44 mM for 6-deoxypenciclovir (at 37 degrees Celsius and pH 7)</KM>
        <KM evidence="8">45 uM for isovanillin (at 37 degrees Celsius and pH 7)</KM>
        <Vmax evidence="7">192.0 nmol/min/mg enzyme with all-trans-retinal as substrate</Vmax>
        <Vmax evidence="7">57.0 nmol/min/mg enzyme with 9-cis-retinal as substrate</Vmax>
        <Vmax evidence="7">105.0 nmol/min/mg enzyme with 13-cis-retinal as substrate</Vmax>
        <Vmax evidence="7">267.0 nmol/min/mg enzyme with N-methylnicotinamide as substrate</Vmax>
        <Vmax evidence="8">114.0 nmol/min/mg enzyme with 6-deoxypenciclovir as substrate</Vmax>
        <Vmax evidence="8">211.0 nmol/min/mg enzyme with isovanillin as substrate</Vmax>
    </kinetics>
</comment>
<comment type="subunit">
    <text evidence="7">Homodimer.</text>
</comment>
<comment type="subcellular location">
    <subcellularLocation>
        <location evidence="7">Cytoplasm</location>
    </subcellularLocation>
</comment>
<comment type="tissue specificity">
    <text evidence="5 7">Very high expression in liver and lung. High expression in kidney, pancreas, brain stem and spinal cord. Moderate expression in heart, testis, eye, cerebral cortex and cerebellum. Low expression in stomach and muscle.</text>
</comment>
<comment type="PTM">
    <text>The N-terminus is blocked.</text>
</comment>
<comment type="miscellaneous">
    <text evidence="12">The reaction follows an ordered Bi-Bi kinetic mechanism. During retinal oxidation, incorporates the oxygen of water into retinoate, but not that of molecular oxygen (PubMed:8305467).</text>
</comment>
<comment type="miscellaneous">
    <text evidence="11">AOX genes evolved from a xanthine oxidoreductase ancestral precursor via a series of gene duplication and suppression/deletion events. Different animal species contain a different complement of AOX genes encoding an equivalent number of AOX isoenzymes. In mammals, the two extremes are represented by certain rodents such as mice and rats, which are endowed with 4 AOX genes, and by humans, whose genome is characterized by a single active gene (PubMed:23263164).</text>
</comment>
<comment type="similarity">
    <text evidence="10">Belongs to the xanthine dehydrogenase family.</text>
</comment>
<name>AOXA_RABIT</name>
<evidence type="ECO:0000250" key="1">
    <source>
        <dbReference type="UniProtKB" id="O54754"/>
    </source>
</evidence>
<evidence type="ECO:0000250" key="2">
    <source>
        <dbReference type="UniProtKB" id="Q06278"/>
    </source>
</evidence>
<evidence type="ECO:0000255" key="3">
    <source>
        <dbReference type="PROSITE-ProRule" id="PRU00465"/>
    </source>
</evidence>
<evidence type="ECO:0000255" key="4">
    <source>
        <dbReference type="PROSITE-ProRule" id="PRU00718"/>
    </source>
</evidence>
<evidence type="ECO:0000269" key="5">
    <source>
    </source>
</evidence>
<evidence type="ECO:0000269" key="6">
    <source>
    </source>
</evidence>
<evidence type="ECO:0000269" key="7">
    <source>
    </source>
</evidence>
<evidence type="ECO:0000269" key="8">
    <source>
    </source>
</evidence>
<evidence type="ECO:0000303" key="9">
    <source>
    </source>
</evidence>
<evidence type="ECO:0000305" key="10"/>
<evidence type="ECO:0000305" key="11">
    <source>
    </source>
</evidence>
<evidence type="ECO:0000305" key="12">
    <source>
    </source>
</evidence>
<evidence type="ECO:0000305" key="13">
    <source>
    </source>
</evidence>
<organism>
    <name type="scientific">Oryctolagus cuniculus</name>
    <name type="common">Rabbit</name>
    <dbReference type="NCBI Taxonomy" id="9986"/>
    <lineage>
        <taxon>Eukaryota</taxon>
        <taxon>Metazoa</taxon>
        <taxon>Chordata</taxon>
        <taxon>Craniata</taxon>
        <taxon>Vertebrata</taxon>
        <taxon>Euteleostomi</taxon>
        <taxon>Mammalia</taxon>
        <taxon>Eutheria</taxon>
        <taxon>Euarchontoglires</taxon>
        <taxon>Glires</taxon>
        <taxon>Lagomorpha</taxon>
        <taxon>Leporidae</taxon>
        <taxon>Oryctolagus</taxon>
    </lineage>
</organism>
<proteinExistence type="evidence at protein level"/>
<reference key="1">
    <citation type="journal article" date="1999" name="Arch. Biochem. Biophys.">
        <title>Molecular cloning of retinal oxidase/aldehyde oxidase cDNAs from rabbit and mouse livers and functional expression of recombinant mouse retinal oxidase cDNA in Escherichia coli.</title>
        <authorList>
            <person name="Huang D.-Y."/>
            <person name="Furukawa A."/>
            <person name="Ichikawa Y."/>
        </authorList>
    </citation>
    <scope>NUCLEOTIDE SEQUENCE [MRNA]</scope>
    <scope>PROTEIN SEQUENCE OF 857-884; 891-943 AND 1272-1293</scope>
    <scope>FUNCTION</scope>
    <scope>TISSUE SPECIFICITY</scope>
    <source>
        <strain>Japanese white</strain>
        <tissue>Liver</tissue>
    </source>
</reference>
<reference key="2">
    <citation type="journal article" date="1995" name="Eur. J. Biochem.">
        <title>Properties of rabbit liver aldehyde oxidase and the relationship of the enzyme to xanthine oxidase and dehydrogenase.</title>
        <authorList>
            <person name="Turner N.A."/>
            <person name="Doyle W.A."/>
            <person name="Ventom A.M."/>
            <person name="Bray R.C."/>
        </authorList>
    </citation>
    <scope>PROTEIN SEQUENCE OF 203-231 AND 574-597</scope>
    <scope>FUNCTION AS OXIDASE</scope>
    <scope>COFACTOR</scope>
    <source>
        <tissue>Liver</tissue>
    </source>
</reference>
<reference key="3">
    <citation type="journal article" date="1994" name="Biochim. Biophys. Acta">
        <title>Characteristic properties of retinal oxidase (retinoic acid synthase) from rabbit hepatocytes.</title>
        <authorList>
            <person name="Tsujita M."/>
            <person name="Tomita S."/>
            <person name="Miura S."/>
            <person name="Ichikawa Y."/>
        </authorList>
    </citation>
    <scope>FUNCTION AS OXIDASE</scope>
    <scope>CATALYTIC ACTIVITY</scope>
    <scope>SUBSTRATE SPECIFICITY</scope>
    <scope>BIOPHYSICOCHEMICAL PROPERTIES</scope>
    <scope>HOMODIMER</scope>
    <scope>SUBCELLULAR LOCATION</scope>
    <scope>TISSUE SPECIFICITY</scope>
    <scope>REACTION MECHANISM</scope>
    <scope>BLOCKAGE OF N-TERMINUS</scope>
    <scope>ACTIVITY REGULATION</scope>
</reference>
<reference key="4">
    <citation type="journal article" date="1997" name="Drug Metab. Dispos.">
        <title>In vitro oxidation of famciclovir and 6-deoxypenciclovir by aldehyde oxidase from human, guinea pig, rabbit, and rat liver.</title>
        <authorList>
            <person name="Rashidi M.R."/>
            <person name="Smith J.A."/>
            <person name="Clarke S.E."/>
            <person name="Beedham C."/>
        </authorList>
    </citation>
    <scope>FUNCTION AS AZAHETEROCYCLE OXIDASE</scope>
    <scope>CATALYTIC ACTIVITY</scope>
    <scope>ACTIVITY REGULATION</scope>
    <scope>BIOPHYSICOCHEMICAL PROPERTIES</scope>
</reference>
<reference key="5">
    <citation type="journal article" date="2013" name="Cell. Mol. Life Sci.">
        <title>Structure and evolution of vertebrate aldehyde oxidases: from gene duplication to gene suppression.</title>
        <authorList>
            <person name="Kurosaki M."/>
            <person name="Bolis M."/>
            <person name="Fratelli M."/>
            <person name="Barzago M.M."/>
            <person name="Pattini L."/>
            <person name="Perretta G."/>
            <person name="Terao M."/>
            <person name="Garattini E."/>
        </authorList>
    </citation>
    <scope>IDENTIFICATION OF PARALOGS</scope>
</reference>
<feature type="chain" id="PRO_0000166107" description="Aldehyde oxidase 1">
    <location>
        <begin position="1"/>
        <end position="1334"/>
    </location>
</feature>
<feature type="domain" description="2Fe-2S ferredoxin-type" evidence="3">
    <location>
        <begin position="5"/>
        <end position="92"/>
    </location>
</feature>
<feature type="domain" description="FAD-binding PCMH-type" evidence="4">
    <location>
        <begin position="236"/>
        <end position="421"/>
    </location>
</feature>
<feature type="active site" description="Proton acceptor; for azaheterocycle hydroxylase activity" evidence="1">
    <location>
        <position position="1266"/>
    </location>
</feature>
<feature type="binding site" evidence="2">
    <location>
        <position position="44"/>
    </location>
    <ligand>
        <name>[2Fe-2S] cluster</name>
        <dbReference type="ChEBI" id="CHEBI:190135"/>
        <label>1</label>
    </ligand>
</feature>
<feature type="binding site" evidence="2">
    <location>
        <position position="49"/>
    </location>
    <ligand>
        <name>[2Fe-2S] cluster</name>
        <dbReference type="ChEBI" id="CHEBI:190135"/>
        <label>1</label>
    </ligand>
</feature>
<feature type="binding site" evidence="2">
    <location>
        <position position="52"/>
    </location>
    <ligand>
        <name>[2Fe-2S] cluster</name>
        <dbReference type="ChEBI" id="CHEBI:190135"/>
        <label>1</label>
    </ligand>
</feature>
<feature type="binding site" evidence="2">
    <location>
        <position position="74"/>
    </location>
    <ligand>
        <name>[2Fe-2S] cluster</name>
        <dbReference type="ChEBI" id="CHEBI:190135"/>
        <label>1</label>
    </ligand>
</feature>
<feature type="binding site" evidence="2">
    <location>
        <position position="113"/>
    </location>
    <ligand>
        <name>Mo-molybdopterin</name>
        <dbReference type="ChEBI" id="CHEBI:71302"/>
    </ligand>
</feature>
<feature type="binding site" evidence="2">
    <location>
        <position position="114"/>
    </location>
    <ligand>
        <name>[2Fe-2S] cluster</name>
        <dbReference type="ChEBI" id="CHEBI:190135"/>
        <label>2</label>
    </ligand>
</feature>
<feature type="binding site" evidence="2">
    <location>
        <position position="117"/>
    </location>
    <ligand>
        <name>[2Fe-2S] cluster</name>
        <dbReference type="ChEBI" id="CHEBI:190135"/>
        <label>2</label>
    </ligand>
</feature>
<feature type="binding site" evidence="2">
    <location>
        <position position="149"/>
    </location>
    <ligand>
        <name>[2Fe-2S] cluster</name>
        <dbReference type="ChEBI" id="CHEBI:190135"/>
        <label>2</label>
    </ligand>
</feature>
<feature type="binding site" evidence="2">
    <location>
        <position position="151"/>
    </location>
    <ligand>
        <name>[2Fe-2S] cluster</name>
        <dbReference type="ChEBI" id="CHEBI:190135"/>
        <label>2</label>
    </ligand>
</feature>
<feature type="binding site" evidence="2">
    <location>
        <position position="151"/>
    </location>
    <ligand>
        <name>Mo-molybdopterin</name>
        <dbReference type="ChEBI" id="CHEBI:71302"/>
    </ligand>
</feature>
<feature type="binding site" evidence="2">
    <location>
        <begin position="264"/>
        <end position="271"/>
    </location>
    <ligand>
        <name>FAD</name>
        <dbReference type="ChEBI" id="CHEBI:57692"/>
    </ligand>
</feature>
<feature type="binding site" evidence="2">
    <location>
        <position position="345"/>
    </location>
    <ligand>
        <name>FAD</name>
        <dbReference type="ChEBI" id="CHEBI:57692"/>
    </ligand>
</feature>
<feature type="binding site" evidence="2">
    <location>
        <position position="354"/>
    </location>
    <ligand>
        <name>FAD</name>
        <dbReference type="ChEBI" id="CHEBI:57692"/>
    </ligand>
</feature>
<feature type="binding site" evidence="2">
    <location>
        <position position="358"/>
    </location>
    <ligand>
        <name>FAD</name>
        <dbReference type="ChEBI" id="CHEBI:57692"/>
    </ligand>
</feature>
<feature type="binding site" evidence="2">
    <location>
        <position position="367"/>
    </location>
    <ligand>
        <name>FAD</name>
        <dbReference type="ChEBI" id="CHEBI:57692"/>
    </ligand>
</feature>
<feature type="binding site" evidence="2">
    <location>
        <position position="411"/>
    </location>
    <ligand>
        <name>FAD</name>
        <dbReference type="ChEBI" id="CHEBI:57692"/>
    </ligand>
</feature>
<feature type="binding site" evidence="2">
    <location>
        <begin position="802"/>
        <end position="803"/>
    </location>
    <ligand>
        <name>Mo-molybdopterin</name>
        <dbReference type="ChEBI" id="CHEBI:71302"/>
    </ligand>
</feature>
<feature type="binding site" evidence="2">
    <location>
        <position position="1043"/>
    </location>
    <ligand>
        <name>Mo-molybdopterin</name>
        <dbReference type="ChEBI" id="CHEBI:71302"/>
    </ligand>
</feature>
<feature type="binding site" evidence="2">
    <location>
        <begin position="1084"/>
        <end position="1087"/>
    </location>
    <ligand>
        <name>Mo-molybdopterin</name>
        <dbReference type="ChEBI" id="CHEBI:71302"/>
    </ligand>
</feature>
<feature type="binding site" evidence="2">
    <location>
        <position position="1199"/>
    </location>
    <ligand>
        <name>Mo-molybdopterin</name>
        <dbReference type="ChEBI" id="CHEBI:71302"/>
    </ligand>
</feature>
<feature type="binding site" evidence="2">
    <location>
        <position position="1264"/>
    </location>
    <ligand>
        <name>Mo-molybdopterin</name>
        <dbReference type="ChEBI" id="CHEBI:71302"/>
    </ligand>
</feature>
<feature type="modified residue" description="Phosphoserine" evidence="2">
    <location>
        <position position="1064"/>
    </location>
</feature>
<accession>P80456</accession>
<accession>Q9XTA9</accession>
<gene>
    <name evidence="2" type="primary">AOX1</name>
    <name type="synonym">AO</name>
</gene>
<sequence length="1334" mass="147138">MEPAPELLFYVNGRKVVEKQVDPETMLLPYLRKKLRLTGTKYGCGGGGCGACTVMISRYNRVTKKIRHYPVNACLTPICSLYGAAVTTVEGIGSTTTRLHPVQERIAKFHGTQCGFCTPGMVMSMYALLRNHPEPTLDQLADALGGNLCRCTGYRPIIEAYKTFCKTSDCCQNKENGFCCLDQGINGLPEVEEENQTRPNLFSEEEYLPLDPTQELIFPPELMTMAEKQPQRTRVFSGERMMWISPVTLKALLEAKSTYPQAPVVMGNTSVGPGVKFKGIFHPVIISPDSIEELNVVSHTHSGLTLGAGLSLAQVKDILADVVQKVPEENAQTYRALLKHLGTLAGSQIRNMASLGGHIISRHLDSDLNPLLAVGNCTLNVLSKEGERQIPLDEQFLSRCPEADLKPQEILASVHIPYSRKWEFVLAFRQAQRKQNALAIVNSGMRVFFGEGDGIIRELAISYGGVGPTIICAKNSCQKLIGRSWNEEMLDTACRLILDEVSLPGSAPGGKVEFKRTLIISFLFKFYLEVSQILKRMAPGLSPHLADKYESALQDLHARYSWSTLKDQDVDARQLSQDPIGHPVMHLSGVKHATGEAIYLDDMPAVDQELFMAFVTSPRAHAKIVSTDLLEALSLPGVVDIVTAEHLQDGNTFYTEKLLAADEVLCVGQLVCAVIAESEVQAKQAAKQVKIVYEDLEPVILSIEEAIEQKSFFEPERKLEYGNVDEAFKVVDQILEGEIHMGGQEHFYMETQSVLVVPKGEDQEMDVYASTQFPKYIQDMVAAVLKLPVNKVMCHVKRVGGAFGGKVFKASIMAAIAAFAANKHGRAVRCILERGEDMLITGGRHPYLGKYKAGFMNDGRIVALDVEHYSNGGCSLDESLLVIEMGLLKMENAYKFPNLRCRGWACRTNLPSNTAFRGFGFPQAGLITECCITEVAAKCGLSPEKVRAINFYKEIDQTPYKQEINAKNLTQCWNECLAKSSYFQRKVAVEKFNAENYWKQRGLAIIPFKYPRGLGSVAYGQAAALVHVYLDGSVLVTHGGIEMGQGVHTKMIQVVSRELKMPMSNVHLRGTSTETVPNTNASGGSVVADLNGLAVKDACQTLLKRLEPIINKNPQGTWKEWAQAAFDKSISLSATGYFRGYDSNIDWDKGEGHPFEYFVYGAACSEVEIDCLTGDHKTIRTDIVMDVGYSINPALDIGQVEGAFIQGMGLYTIEELHYSPQGILYSRGPNQYKIPAICDIPAELNVTFLPPSEKSNTLYSSKGLGESGVFMGCSVFFAIREAVCAARQARGLSAPWKLSSPLTPEKIRMACEDKFTKMIPRDKPGSYVPWNVPV</sequence>
<protein>
    <recommendedName>
        <fullName evidence="2">Aldehyde oxidase 1</fullName>
        <ecNumber evidence="7 8">1.2.3.1</ecNumber>
    </recommendedName>
    <alternativeName>
        <fullName evidence="13">Azaheterocycle hydroxylase 1</fullName>
        <ecNumber evidence="8">1.17.3.-</ecNumber>
    </alternativeName>
    <alternativeName>
        <fullName evidence="9">Retinal oxidase</fullName>
    </alternativeName>
    <alternativeName>
        <fullName evidence="9">Retinoic acid synthase</fullName>
    </alternativeName>
</protein>